<keyword id="KW-0064">Aspartyl protease</keyword>
<keyword id="KW-0167">Capsid protein</keyword>
<keyword id="KW-0229">DNA integration</keyword>
<keyword id="KW-0233">DNA recombination</keyword>
<keyword id="KW-0238">DNA-binding</keyword>
<keyword id="KW-0239">DNA-directed DNA polymerase</keyword>
<keyword id="KW-0255">Endonuclease</keyword>
<keyword id="KW-1032">Host cell membrane</keyword>
<keyword id="KW-1035">Host cytoplasm</keyword>
<keyword id="KW-1039">Host endosome</keyword>
<keyword id="KW-1043">Host membrane</keyword>
<keyword id="KW-0945">Host-virus interaction</keyword>
<keyword id="KW-0378">Hydrolase</keyword>
<keyword id="KW-0449">Lipoprotein</keyword>
<keyword id="KW-0460">Magnesium</keyword>
<keyword id="KW-0472">Membrane</keyword>
<keyword id="KW-0479">Metal-binding</keyword>
<keyword id="KW-0511">Multifunctional enzyme</keyword>
<keyword id="KW-0519">Myristate</keyword>
<keyword id="KW-0540">Nuclease</keyword>
<keyword id="KW-0548">Nucleotidyltransferase</keyword>
<keyword id="KW-0597">Phosphoprotein</keyword>
<keyword id="KW-0645">Protease</keyword>
<keyword id="KW-0694">RNA-binding</keyword>
<keyword id="KW-0695">RNA-directed DNA polymerase</keyword>
<keyword id="KW-0808">Transferase</keyword>
<keyword id="KW-1179">Viral genome integration</keyword>
<keyword id="KW-0468">Viral matrix protein</keyword>
<keyword id="KW-0543">Viral nucleoprotein</keyword>
<keyword id="KW-0946">Virion</keyword>
<keyword id="KW-1160">Virus entry into host cell</keyword>
<keyword id="KW-0862">Zinc</keyword>
<keyword id="KW-0863">Zinc-finger</keyword>
<organism>
    <name type="scientific">Feline leukemia virus</name>
    <dbReference type="NCBI Taxonomy" id="11768"/>
    <lineage>
        <taxon>Viruses</taxon>
        <taxon>Riboviria</taxon>
        <taxon>Pararnavirae</taxon>
        <taxon>Artverviricota</taxon>
        <taxon>Revtraviricetes</taxon>
        <taxon>Ortervirales</taxon>
        <taxon>Retroviridae</taxon>
        <taxon>Orthoretrovirinae</taxon>
        <taxon>Gammaretrovirus</taxon>
    </lineage>
</organism>
<reference key="1">
    <citation type="journal article" date="1998" name="J. Virol.">
        <title>Pathogenicity induced by feline leukemia virus, Rickard strain, subgroup A plasmid DNA (pFRA).</title>
        <authorList>
            <person name="Chen H."/>
            <person name="Bechtel M.K."/>
            <person name="Shi Y."/>
            <person name="Phipps A."/>
            <person name="Mathes L.E."/>
            <person name="Hayes K.A."/>
            <person name="Roy-Burman P."/>
        </authorList>
    </citation>
    <scope>NUCLEOTIDE SEQUENCE [LARGE SCALE GENOMIC DNA]</scope>
    <source>
        <strain>Rickard subgroup A</strain>
    </source>
</reference>
<reference key="2">
    <citation type="journal article" date="1984" name="J. Virol.">
        <title>Nucleotide sequence of the gag gene and gag-pol junction of feline leukemia virus.</title>
        <authorList>
            <person name="Laprevotte I."/>
            <person name="Hampe A."/>
            <person name="Sherr C.J."/>
            <person name="Galibert F."/>
        </authorList>
    </citation>
    <scope>NUCLEOTIDE SEQUENCE [GENOMIC RNA] OF 1-706</scope>
</reference>
<protein>
    <recommendedName>
        <fullName>Gag-Pol polyprotein</fullName>
    </recommendedName>
    <component>
        <recommendedName>
            <fullName>Matrix protein p15</fullName>
        </recommendedName>
    </component>
    <component>
        <recommendedName>
            <fullName>RNA-binding phosphoprotein p12</fullName>
        </recommendedName>
        <alternativeName>
            <fullName>pp12</fullName>
        </alternativeName>
    </component>
    <component>
        <recommendedName>
            <fullName>Capsid protein p30</fullName>
        </recommendedName>
    </component>
    <component>
        <recommendedName>
            <fullName>Nucleocapsid protein p10-Pol</fullName>
            <shortName>NC-pol</shortName>
        </recommendedName>
    </component>
    <component>
        <recommendedName>
            <fullName>Protease</fullName>
            <ecNumber evidence="7">3.4.23.-</ecNumber>
        </recommendedName>
    </component>
    <component>
        <recommendedName>
            <fullName>Reverse transcriptase/ribonuclease H</fullName>
            <shortName>RT</shortName>
            <ecNumber evidence="8">2.7.7.49</ecNumber>
            <ecNumber evidence="8">2.7.7.7</ecNumber>
            <ecNumber evidence="9">3.1.26.4</ecNumber>
        </recommendedName>
    </component>
    <component>
        <recommendedName>
            <fullName>Integrase</fullName>
            <shortName>IN</shortName>
            <ecNumber evidence="3">2.7.7.-</ecNumber>
            <ecNumber evidence="3">3.1.-.-</ecNumber>
        </recommendedName>
    </component>
</protein>
<proteinExistence type="inferred from homology"/>
<dbReference type="EC" id="3.4.23.-" evidence="7"/>
<dbReference type="EC" id="2.7.7.49" evidence="8"/>
<dbReference type="EC" id="2.7.7.7" evidence="8"/>
<dbReference type="EC" id="3.1.26.4" evidence="9"/>
<dbReference type="EC" id="2.7.7.-" evidence="3"/>
<dbReference type="EC" id="3.1.-.-" evidence="3"/>
<dbReference type="EMBL" id="AF052723">
    <property type="protein sequence ID" value="AAC31801.1"/>
    <property type="status" value="ALT_INIT"/>
    <property type="molecule type" value="Genomic_DNA"/>
</dbReference>
<dbReference type="EMBL" id="K01803">
    <property type="protein sequence ID" value="AAA43056.2"/>
    <property type="status" value="ALT_SEQ"/>
    <property type="molecule type" value="Genomic_RNA"/>
</dbReference>
<dbReference type="SMR" id="P10273"/>
<dbReference type="MEROPS" id="A02.008"/>
<dbReference type="KEGG" id="vg:1724726"/>
<dbReference type="Proteomes" id="UP000118006">
    <property type="component" value="Genome"/>
</dbReference>
<dbReference type="GO" id="GO:0044185">
    <property type="term" value="C:host cell late endosome membrane"/>
    <property type="evidence" value="ECO:0007669"/>
    <property type="project" value="UniProtKB-SubCell"/>
</dbReference>
<dbReference type="GO" id="GO:0020002">
    <property type="term" value="C:host cell plasma membrane"/>
    <property type="evidence" value="ECO:0007669"/>
    <property type="project" value="UniProtKB-SubCell"/>
</dbReference>
<dbReference type="GO" id="GO:0072494">
    <property type="term" value="C:host multivesicular body"/>
    <property type="evidence" value="ECO:0007669"/>
    <property type="project" value="UniProtKB-SubCell"/>
</dbReference>
<dbReference type="GO" id="GO:0016020">
    <property type="term" value="C:membrane"/>
    <property type="evidence" value="ECO:0007669"/>
    <property type="project" value="UniProtKB-KW"/>
</dbReference>
<dbReference type="GO" id="GO:0019013">
    <property type="term" value="C:viral nucleocapsid"/>
    <property type="evidence" value="ECO:0007669"/>
    <property type="project" value="UniProtKB-KW"/>
</dbReference>
<dbReference type="GO" id="GO:0004190">
    <property type="term" value="F:aspartic-type endopeptidase activity"/>
    <property type="evidence" value="ECO:0007669"/>
    <property type="project" value="UniProtKB-KW"/>
</dbReference>
<dbReference type="GO" id="GO:0003677">
    <property type="term" value="F:DNA binding"/>
    <property type="evidence" value="ECO:0007669"/>
    <property type="project" value="UniProtKB-KW"/>
</dbReference>
<dbReference type="GO" id="GO:0003887">
    <property type="term" value="F:DNA-directed DNA polymerase activity"/>
    <property type="evidence" value="ECO:0007669"/>
    <property type="project" value="UniProtKB-KW"/>
</dbReference>
<dbReference type="GO" id="GO:0003723">
    <property type="term" value="F:RNA binding"/>
    <property type="evidence" value="ECO:0007669"/>
    <property type="project" value="UniProtKB-KW"/>
</dbReference>
<dbReference type="GO" id="GO:0003964">
    <property type="term" value="F:RNA-directed DNA polymerase activity"/>
    <property type="evidence" value="ECO:0007669"/>
    <property type="project" value="UniProtKB-KW"/>
</dbReference>
<dbReference type="GO" id="GO:0004523">
    <property type="term" value="F:RNA-DNA hybrid ribonuclease activity"/>
    <property type="evidence" value="ECO:0007669"/>
    <property type="project" value="UniProtKB-EC"/>
</dbReference>
<dbReference type="GO" id="GO:0039660">
    <property type="term" value="F:structural constituent of virion"/>
    <property type="evidence" value="ECO:0007669"/>
    <property type="project" value="UniProtKB-KW"/>
</dbReference>
<dbReference type="GO" id="GO:0008270">
    <property type="term" value="F:zinc ion binding"/>
    <property type="evidence" value="ECO:0007669"/>
    <property type="project" value="UniProtKB-KW"/>
</dbReference>
<dbReference type="GO" id="GO:0015074">
    <property type="term" value="P:DNA integration"/>
    <property type="evidence" value="ECO:0007669"/>
    <property type="project" value="UniProtKB-KW"/>
</dbReference>
<dbReference type="GO" id="GO:0006310">
    <property type="term" value="P:DNA recombination"/>
    <property type="evidence" value="ECO:0007669"/>
    <property type="project" value="UniProtKB-KW"/>
</dbReference>
<dbReference type="GO" id="GO:0075713">
    <property type="term" value="P:establishment of integrated proviral latency"/>
    <property type="evidence" value="ECO:0007669"/>
    <property type="project" value="UniProtKB-KW"/>
</dbReference>
<dbReference type="GO" id="GO:0006508">
    <property type="term" value="P:proteolysis"/>
    <property type="evidence" value="ECO:0007669"/>
    <property type="project" value="UniProtKB-KW"/>
</dbReference>
<dbReference type="GO" id="GO:0046718">
    <property type="term" value="P:symbiont entry into host cell"/>
    <property type="evidence" value="ECO:0007669"/>
    <property type="project" value="UniProtKB-KW"/>
</dbReference>
<dbReference type="GO" id="GO:0044826">
    <property type="term" value="P:viral genome integration into host DNA"/>
    <property type="evidence" value="ECO:0007669"/>
    <property type="project" value="UniProtKB-KW"/>
</dbReference>
<dbReference type="GO" id="GO:0019068">
    <property type="term" value="P:virion assembly"/>
    <property type="evidence" value="ECO:0007669"/>
    <property type="project" value="InterPro"/>
</dbReference>
<dbReference type="CDD" id="cd09273">
    <property type="entry name" value="RNase_HI_RT_Bel"/>
    <property type="match status" value="1"/>
</dbReference>
<dbReference type="CDD" id="cd06095">
    <property type="entry name" value="RP_RTVL_H_like"/>
    <property type="match status" value="1"/>
</dbReference>
<dbReference type="CDD" id="cd03715">
    <property type="entry name" value="RT_ZFREV_like"/>
    <property type="match status" value="1"/>
</dbReference>
<dbReference type="FunFam" id="3.30.70.270:FF:000020">
    <property type="entry name" value="Transposon Tf2-6 polyprotein-like Protein"/>
    <property type="match status" value="1"/>
</dbReference>
<dbReference type="Gene3D" id="1.10.340.70">
    <property type="match status" value="1"/>
</dbReference>
<dbReference type="Gene3D" id="2.30.30.850">
    <property type="match status" value="1"/>
</dbReference>
<dbReference type="Gene3D" id="3.10.20.370">
    <property type="match status" value="1"/>
</dbReference>
<dbReference type="Gene3D" id="3.30.70.270">
    <property type="match status" value="2"/>
</dbReference>
<dbReference type="Gene3D" id="2.40.70.10">
    <property type="entry name" value="Acid Proteases"/>
    <property type="match status" value="1"/>
</dbReference>
<dbReference type="Gene3D" id="1.10.150.180">
    <property type="entry name" value="Gamma-retroviral matrix domain"/>
    <property type="match status" value="1"/>
</dbReference>
<dbReference type="Gene3D" id="3.10.10.10">
    <property type="entry name" value="HIV Type 1 Reverse Transcriptase, subunit A, domain 1"/>
    <property type="match status" value="1"/>
</dbReference>
<dbReference type="Gene3D" id="1.10.375.10">
    <property type="entry name" value="Human Immunodeficiency Virus Type 1 Capsid Protein"/>
    <property type="match status" value="1"/>
</dbReference>
<dbReference type="Gene3D" id="3.30.420.10">
    <property type="entry name" value="Ribonuclease H-like superfamily/Ribonuclease H"/>
    <property type="match status" value="2"/>
</dbReference>
<dbReference type="Gene3D" id="4.10.60.10">
    <property type="entry name" value="Zinc finger, CCHC-type"/>
    <property type="match status" value="1"/>
</dbReference>
<dbReference type="InterPro" id="IPR001969">
    <property type="entry name" value="Aspartic_peptidase_AS"/>
</dbReference>
<dbReference type="InterPro" id="IPR043502">
    <property type="entry name" value="DNA/RNA_pol_sf"/>
</dbReference>
<dbReference type="InterPro" id="IPR000840">
    <property type="entry name" value="G_retro_matrix"/>
</dbReference>
<dbReference type="InterPro" id="IPR036946">
    <property type="entry name" value="G_retro_matrix_sf"/>
</dbReference>
<dbReference type="InterPro" id="IPR039464">
    <property type="entry name" value="Gag-pol_Znf-H3C2"/>
</dbReference>
<dbReference type="InterPro" id="IPR002079">
    <property type="entry name" value="Gag_p12"/>
</dbReference>
<dbReference type="InterPro" id="IPR003036">
    <property type="entry name" value="Gag_P30"/>
</dbReference>
<dbReference type="InterPro" id="IPR001584">
    <property type="entry name" value="Integrase_cat-core"/>
</dbReference>
<dbReference type="InterPro" id="IPR040643">
    <property type="entry name" value="MLVIN_C"/>
</dbReference>
<dbReference type="InterPro" id="IPR001995">
    <property type="entry name" value="Peptidase_A2_cat"/>
</dbReference>
<dbReference type="InterPro" id="IPR021109">
    <property type="entry name" value="Peptidase_aspartic_dom_sf"/>
</dbReference>
<dbReference type="InterPro" id="IPR018061">
    <property type="entry name" value="Retropepsins"/>
</dbReference>
<dbReference type="InterPro" id="IPR008919">
    <property type="entry name" value="Retrov_capsid_N"/>
</dbReference>
<dbReference type="InterPro" id="IPR050462">
    <property type="entry name" value="Retroviral_Gag-Pol_poly"/>
</dbReference>
<dbReference type="InterPro" id="IPR010999">
    <property type="entry name" value="Retrovr_matrix"/>
</dbReference>
<dbReference type="InterPro" id="IPR043128">
    <property type="entry name" value="Rev_trsase/Diguanyl_cyclase"/>
</dbReference>
<dbReference type="InterPro" id="IPR012337">
    <property type="entry name" value="RNaseH-like_sf"/>
</dbReference>
<dbReference type="InterPro" id="IPR002156">
    <property type="entry name" value="RNaseH_domain"/>
</dbReference>
<dbReference type="InterPro" id="IPR036397">
    <property type="entry name" value="RNaseH_sf"/>
</dbReference>
<dbReference type="InterPro" id="IPR000477">
    <property type="entry name" value="RT_dom"/>
</dbReference>
<dbReference type="InterPro" id="IPR041577">
    <property type="entry name" value="RT_RNaseH_2"/>
</dbReference>
<dbReference type="InterPro" id="IPR001878">
    <property type="entry name" value="Znf_CCHC"/>
</dbReference>
<dbReference type="InterPro" id="IPR036875">
    <property type="entry name" value="Znf_CCHC_sf"/>
</dbReference>
<dbReference type="PANTHER" id="PTHR33166">
    <property type="entry name" value="GAG_P30 DOMAIN-CONTAINING PROTEIN"/>
    <property type="match status" value="1"/>
</dbReference>
<dbReference type="Pfam" id="PF01140">
    <property type="entry name" value="Gag_MA"/>
    <property type="match status" value="1"/>
</dbReference>
<dbReference type="Pfam" id="PF01141">
    <property type="entry name" value="Gag_p12"/>
    <property type="match status" value="1"/>
</dbReference>
<dbReference type="Pfam" id="PF02093">
    <property type="entry name" value="Gag_p30"/>
    <property type="match status" value="1"/>
</dbReference>
<dbReference type="Pfam" id="PF18697">
    <property type="entry name" value="MLVIN_C"/>
    <property type="match status" value="1"/>
</dbReference>
<dbReference type="Pfam" id="PF00075">
    <property type="entry name" value="RNase_H"/>
    <property type="match status" value="1"/>
</dbReference>
<dbReference type="Pfam" id="PF17919">
    <property type="entry name" value="RT_RNaseH_2"/>
    <property type="match status" value="1"/>
</dbReference>
<dbReference type="Pfam" id="PF00665">
    <property type="entry name" value="rve"/>
    <property type="match status" value="1"/>
</dbReference>
<dbReference type="Pfam" id="PF00077">
    <property type="entry name" value="RVP"/>
    <property type="match status" value="1"/>
</dbReference>
<dbReference type="Pfam" id="PF00078">
    <property type="entry name" value="RVT_1"/>
    <property type="match status" value="1"/>
</dbReference>
<dbReference type="Pfam" id="PF00098">
    <property type="entry name" value="zf-CCHC"/>
    <property type="match status" value="1"/>
</dbReference>
<dbReference type="Pfam" id="PF16721">
    <property type="entry name" value="zf-H3C2"/>
    <property type="match status" value="1"/>
</dbReference>
<dbReference type="SMART" id="SM00343">
    <property type="entry name" value="ZnF_C2HC"/>
    <property type="match status" value="1"/>
</dbReference>
<dbReference type="SUPFAM" id="SSF50630">
    <property type="entry name" value="Acid proteases"/>
    <property type="match status" value="1"/>
</dbReference>
<dbReference type="SUPFAM" id="SSF56672">
    <property type="entry name" value="DNA/RNA polymerases"/>
    <property type="match status" value="1"/>
</dbReference>
<dbReference type="SUPFAM" id="SSF47836">
    <property type="entry name" value="Retroviral matrix proteins"/>
    <property type="match status" value="1"/>
</dbReference>
<dbReference type="SUPFAM" id="SSF47943">
    <property type="entry name" value="Retrovirus capsid protein, N-terminal core domain"/>
    <property type="match status" value="1"/>
</dbReference>
<dbReference type="SUPFAM" id="SSF57756">
    <property type="entry name" value="Retrovirus zinc finger-like domains"/>
    <property type="match status" value="1"/>
</dbReference>
<dbReference type="SUPFAM" id="SSF53098">
    <property type="entry name" value="Ribonuclease H-like"/>
    <property type="match status" value="2"/>
</dbReference>
<dbReference type="PROSITE" id="PS50175">
    <property type="entry name" value="ASP_PROT_RETROV"/>
    <property type="match status" value="1"/>
</dbReference>
<dbReference type="PROSITE" id="PS00141">
    <property type="entry name" value="ASP_PROTEASE"/>
    <property type="match status" value="1"/>
</dbReference>
<dbReference type="PROSITE" id="PS50994">
    <property type="entry name" value="INTEGRASE"/>
    <property type="match status" value="1"/>
</dbReference>
<dbReference type="PROSITE" id="PS50879">
    <property type="entry name" value="RNASE_H_1"/>
    <property type="match status" value="1"/>
</dbReference>
<dbReference type="PROSITE" id="PS50878">
    <property type="entry name" value="RT_POL"/>
    <property type="match status" value="1"/>
</dbReference>
<dbReference type="PROSITE" id="PS50158">
    <property type="entry name" value="ZF_CCHC"/>
    <property type="match status" value="1"/>
</dbReference>
<feature type="initiator methionine" description="Removed" evidence="5">
    <location>
        <position position="1"/>
    </location>
</feature>
<feature type="chain" id="PRO_0000259718" description="Gag-Pol polyprotein">
    <location>
        <begin position="2"/>
        <end position="1712"/>
    </location>
</feature>
<feature type="chain" id="PRO_0000442878" description="Matrix protein p15">
    <location>
        <begin position="2"/>
        <end position="127"/>
    </location>
</feature>
<feature type="chain" id="PRO_0000442879" description="RNA-binding phosphoprotein p12">
    <location>
        <begin position="128"/>
        <end position="197"/>
    </location>
</feature>
<feature type="chain" id="PRO_0000442880" description="Capsid protein p30">
    <location>
        <begin position="198"/>
        <end position="445"/>
    </location>
</feature>
<feature type="chain" id="PRO_0000442881" description="Nucleocapsid protein p10-Pol">
    <location>
        <begin position="446"/>
        <end position="502"/>
    </location>
</feature>
<feature type="chain" id="PRO_0000026126" description="Protease">
    <location>
        <begin position="503"/>
        <end position="627"/>
    </location>
</feature>
<feature type="chain" id="PRO_0000026127" description="Reverse transcriptase/ribonuclease H">
    <location>
        <begin position="628"/>
        <end position="1297"/>
    </location>
</feature>
<feature type="chain" id="PRO_0000442882" description="Integrase">
    <location>
        <begin position="1298"/>
        <end position="1712"/>
    </location>
</feature>
<feature type="domain" description="Peptidase A2" evidence="7">
    <location>
        <begin position="529"/>
        <end position="599"/>
    </location>
</feature>
<feature type="domain" description="Reverse transcriptase" evidence="8">
    <location>
        <begin position="708"/>
        <end position="899"/>
    </location>
</feature>
<feature type="domain" description="RNase H type-1" evidence="9">
    <location>
        <begin position="1141"/>
        <end position="1287"/>
    </location>
</feature>
<feature type="domain" description="Integrase catalytic" evidence="10">
    <location>
        <begin position="1411"/>
        <end position="1569"/>
    </location>
</feature>
<feature type="zinc finger region" description="CCHC-type" evidence="6">
    <location>
        <begin position="473"/>
        <end position="490"/>
    </location>
</feature>
<feature type="zinc finger region" description="HHCC-type" evidence="3">
    <location>
        <begin position="1354"/>
        <end position="1394"/>
    </location>
</feature>
<feature type="region of interest" description="Disordered" evidence="11">
    <location>
        <begin position="97"/>
        <end position="208"/>
    </location>
</feature>
<feature type="region of interest" description="Disordered" evidence="11">
    <location>
        <begin position="416"/>
        <end position="440"/>
    </location>
</feature>
<feature type="region of interest" description="Disordered" evidence="11">
    <location>
        <begin position="487"/>
        <end position="518"/>
    </location>
</feature>
<feature type="region of interest" description="Disordered" evidence="11">
    <location>
        <begin position="1262"/>
        <end position="1289"/>
    </location>
</feature>
<feature type="region of interest" description="Disordered" evidence="11">
    <location>
        <begin position="1676"/>
        <end position="1703"/>
    </location>
</feature>
<feature type="short sequence motif" description="PTAP/PSAP motif" evidence="1">
    <location>
        <begin position="107"/>
        <end position="110"/>
    </location>
</feature>
<feature type="short sequence motif" description="LYPX(n)L motif" evidence="1">
    <location>
        <begin position="126"/>
        <end position="130"/>
    </location>
</feature>
<feature type="short sequence motif" description="PPXY motif" evidence="1">
    <location>
        <begin position="157"/>
        <end position="160"/>
    </location>
</feature>
<feature type="compositionally biased region" description="Pro residues" evidence="11">
    <location>
        <begin position="100"/>
        <end position="119"/>
    </location>
</feature>
<feature type="compositionally biased region" description="Low complexity" evidence="11">
    <location>
        <begin position="120"/>
        <end position="132"/>
    </location>
</feature>
<feature type="compositionally biased region" description="Pro residues" evidence="11">
    <location>
        <begin position="136"/>
        <end position="146"/>
    </location>
</feature>
<feature type="compositionally biased region" description="Pro residues" evidence="11">
    <location>
        <begin position="156"/>
        <end position="171"/>
    </location>
</feature>
<feature type="compositionally biased region" description="Basic and acidic residues" evidence="11">
    <location>
        <begin position="416"/>
        <end position="434"/>
    </location>
</feature>
<feature type="compositionally biased region" description="Polar residues" evidence="11">
    <location>
        <begin position="497"/>
        <end position="512"/>
    </location>
</feature>
<feature type="compositionally biased region" description="Basic and acidic residues" evidence="11">
    <location>
        <begin position="1276"/>
        <end position="1287"/>
    </location>
</feature>
<feature type="active site" description="Protease; shared with dimeric partner" evidence="7">
    <location>
        <position position="534"/>
    </location>
</feature>
<feature type="binding site" evidence="8">
    <location>
        <position position="776"/>
    </location>
    <ligand>
        <name>Mg(2+)</name>
        <dbReference type="ChEBI" id="CHEBI:18420"/>
        <label>1</label>
        <note>catalytic; for reverse transcriptase activity</note>
    </ligand>
</feature>
<feature type="binding site" evidence="8">
    <location>
        <position position="850"/>
    </location>
    <ligand>
        <name>Mg(2+)</name>
        <dbReference type="ChEBI" id="CHEBI:18420"/>
        <label>1</label>
        <note>catalytic; for reverse transcriptase activity</note>
    </ligand>
</feature>
<feature type="binding site" evidence="8">
    <location>
        <position position="851"/>
    </location>
    <ligand>
        <name>Mg(2+)</name>
        <dbReference type="ChEBI" id="CHEBI:18420"/>
        <label>1</label>
        <note>catalytic; for reverse transcriptase activity</note>
    </ligand>
</feature>
<feature type="binding site" evidence="9">
    <location>
        <position position="1150"/>
    </location>
    <ligand>
        <name>Mg(2+)</name>
        <dbReference type="ChEBI" id="CHEBI:18420"/>
        <label>2</label>
        <note>catalytic; for RNase H activity</note>
    </ligand>
</feature>
<feature type="binding site" evidence="9">
    <location>
        <position position="1188"/>
    </location>
    <ligand>
        <name>Mg(2+)</name>
        <dbReference type="ChEBI" id="CHEBI:18420"/>
        <label>2</label>
        <note>catalytic; for RNase H activity</note>
    </ligand>
</feature>
<feature type="binding site" evidence="9">
    <location>
        <position position="1209"/>
    </location>
    <ligand>
        <name>Mg(2+)</name>
        <dbReference type="ChEBI" id="CHEBI:18420"/>
        <label>2</label>
        <note>catalytic; for RNase H activity</note>
    </ligand>
</feature>
<feature type="binding site" evidence="9">
    <location>
        <position position="1279"/>
    </location>
    <ligand>
        <name>Mg(2+)</name>
        <dbReference type="ChEBI" id="CHEBI:18420"/>
        <label>2</label>
        <note>catalytic; for RNase H activity</note>
    </ligand>
</feature>
<feature type="binding site" evidence="10">
    <location>
        <position position="1422"/>
    </location>
    <ligand>
        <name>Mg(2+)</name>
        <dbReference type="ChEBI" id="CHEBI:18420"/>
        <label>3</label>
        <note>catalytic; for integrase activity</note>
    </ligand>
</feature>
<feature type="binding site" evidence="10">
    <location>
        <position position="1481"/>
    </location>
    <ligand>
        <name>Mg(2+)</name>
        <dbReference type="ChEBI" id="CHEBI:18420"/>
        <label>3</label>
        <note>catalytic; for integrase activity</note>
    </ligand>
</feature>
<feature type="site" description="Cleavage; by viral protease" evidence="3">
    <location>
        <begin position="127"/>
        <end position="128"/>
    </location>
</feature>
<feature type="site" description="Cleavage; by viral protease" evidence="3">
    <location>
        <begin position="197"/>
        <end position="198"/>
    </location>
</feature>
<feature type="site" description="Cleavage; by viral protease" evidence="3">
    <location>
        <begin position="445"/>
        <end position="446"/>
    </location>
</feature>
<feature type="site" description="Cleavage; by viral protease" evidence="3">
    <location>
        <begin position="502"/>
        <end position="503"/>
    </location>
</feature>
<feature type="site" description="Cleavage; by viral protease" evidence="3">
    <location>
        <begin position="627"/>
        <end position="628"/>
    </location>
</feature>
<feature type="site" description="Cleavage; by viral protease" evidence="3">
    <location>
        <begin position="1297"/>
        <end position="1298"/>
    </location>
</feature>
<feature type="lipid moiety-binding region" description="N-myristoyl glycine; by host" evidence="5">
    <location>
        <position position="2"/>
    </location>
</feature>
<feature type="sequence variant" evidence="13">
    <original>I</original>
    <variation>V</variation>
    <location>
        <position position="5"/>
    </location>
</feature>
<feature type="sequence variant" evidence="13">
    <original>Y</original>
    <variation>H</variation>
    <location>
        <position position="74"/>
    </location>
</feature>
<feature type="sequence variant" evidence="13">
    <original>L</original>
    <variation>V</variation>
    <location>
        <position position="130"/>
    </location>
</feature>
<feature type="sequence variant" evidence="13">
    <original>S</original>
    <variation>P</variation>
    <location>
        <position position="133"/>
    </location>
</feature>
<feature type="sequence variant" evidence="13">
    <original>T</original>
    <variation>A</variation>
    <location>
        <position position="175"/>
    </location>
</feature>
<feature type="sequence variant" evidence="13">
    <original>S</original>
    <variation>N</variation>
    <location>
        <position position="460"/>
    </location>
</feature>
<feature type="sequence variant" evidence="13">
    <original>G</original>
    <variation>E</variation>
    <location>
        <position position="505"/>
    </location>
</feature>
<feature type="sequence variant" evidence="13">
    <original>K</original>
    <variation>R</variation>
    <location>
        <position position="523"/>
    </location>
</feature>
<feature type="sequence variant" evidence="13">
    <original>K</original>
    <variation>R</variation>
    <location>
        <position position="620"/>
    </location>
</feature>
<evidence type="ECO:0000250" key="1">
    <source>
        <dbReference type="UniProtKB" id="P03332"/>
    </source>
</evidence>
<evidence type="ECO:0000250" key="2">
    <source>
        <dbReference type="UniProtKB" id="P03336"/>
    </source>
</evidence>
<evidence type="ECO:0000250" key="3">
    <source>
        <dbReference type="UniProtKB" id="P03355"/>
    </source>
</evidence>
<evidence type="ECO:0000250" key="4">
    <source>
        <dbReference type="UniProtKB" id="P26807"/>
    </source>
</evidence>
<evidence type="ECO:0000255" key="5"/>
<evidence type="ECO:0000255" key="6">
    <source>
        <dbReference type="PROSITE-ProRule" id="PRU00047"/>
    </source>
</evidence>
<evidence type="ECO:0000255" key="7">
    <source>
        <dbReference type="PROSITE-ProRule" id="PRU00275"/>
    </source>
</evidence>
<evidence type="ECO:0000255" key="8">
    <source>
        <dbReference type="PROSITE-ProRule" id="PRU00405"/>
    </source>
</evidence>
<evidence type="ECO:0000255" key="9">
    <source>
        <dbReference type="PROSITE-ProRule" id="PRU00408"/>
    </source>
</evidence>
<evidence type="ECO:0000255" key="10">
    <source>
        <dbReference type="PROSITE-ProRule" id="PRU00457"/>
    </source>
</evidence>
<evidence type="ECO:0000256" key="11">
    <source>
        <dbReference type="SAM" id="MobiDB-lite"/>
    </source>
</evidence>
<evidence type="ECO:0000305" key="12"/>
<evidence type="ECO:0000305" key="13">
    <source>
    </source>
</evidence>
<accession>P10273</accession>
<accession>O89811</accession>
<comment type="function">
    <molecule>Gag-Pol polyprotein</molecule>
    <text evidence="1">Plays a role in budding and is processed by the viral protease during virion maturation outside the cell. During budding, it recruits, in a PPXY-dependent or independent manner, Nedd4-like ubiquitin ligases that conjugate ubiquitin molecules to Gag-Pol, or to Gag-Pol binding host factors. Interaction with HECT ubiquitin ligases probably links the viral protein to the host ESCRT pathway and facilitates release.</text>
</comment>
<comment type="function">
    <molecule>Matrix protein p15</molecule>
    <text evidence="1">Targets Gag and gag-pol polyproteins to the plasma membrane via a multipartite membrane binding signal, that includes its myristoylated N-terminus. Also mediates nuclear localization of the pre-integration complex.</text>
</comment>
<comment type="function">
    <molecule>RNA-binding phosphoprotein p12</molecule>
    <text evidence="3">Constituent of the pre-integration complex (PIC) which tethers the latter to mitotic chromosomes. This allows the integration of the viral genome into the host DNA.</text>
</comment>
<comment type="function">
    <molecule>Capsid protein p30</molecule>
    <text evidence="2">Forms the spherical core of the virion that encapsulates the genomic RNA-nucleocapsid complex.</text>
</comment>
<comment type="function">
    <molecule>Nucleocapsid protein p10-Pol</molecule>
    <text evidence="1 3">Involved in the packaging and encapsidation of two copies of the genome (By similarity). Binds with high affinity to conserved UCUG elements within the packaging signal, located near the 5'-end of the genome (By similarity). This binding is dependent on genome dimerization (By similarity). Acts as a nucleic acid chaperone which is involved in rearrangement of nucleic acid secondary structures during gRNA retrotranscription (By similarity).</text>
</comment>
<comment type="function">
    <molecule>Protease</molecule>
    <text evidence="7">The aspartyl protease mediates proteolytic cleavages of Gag and Gag-Pol polyproteins during or shortly after the release of the virion from the plasma membrane. Cleavages take place as an ordered, step-wise cascade to yield mature proteins. This process is called maturation. Displays maximal activity during the budding process just prior to particle release from the cell.</text>
</comment>
<comment type="function">
    <molecule>Reverse transcriptase/ribonuclease H</molecule>
    <text evidence="5">RT is a multifunctional enzyme that converts the viral dimeric RNA genome into dsDNA in the cytoplasm, shortly after virus entry into the cell. This enzyme displays a DNA polymerase activity that can copy either DNA or RNA templates, and a ribonuclease H (RNase H) activity that cleaves the RNA strand of RNA-DNA heteroduplexes in a partially processive 3' to 5' endonucleasic mode. Conversion of viral genomic RNA into dsDNA requires many steps. A tRNA binds to the primer-binding site (PBS) situated at the 5' end of the viral RNA. RT uses the 3' end of the tRNA primer to perform a short round of RNA-dependent minus-strand DNA synthesis. The reading proceeds through the U5 region and ends after the repeated (R) region which is present at both ends of viral RNA. The portion of the RNA-DNA heteroduplex is digested by the RNase H, resulting in a ssDNA product attached to the tRNA primer. This ssDNA/tRNA hybridizes with the identical R region situated at the 3' end of viral RNA. This template exchange, known as minus-strand DNA strong stop transfer, can be either intra- or intermolecular. RT uses the 3' end of this newly synthesized short ssDNA to perform the RNA-dependent minus-strand DNA synthesis of the whole template. RNase H digests the RNA template except for a polypurine tract (PPT) situated at the 5' end of the genome. It is not clear if both polymerase and RNase H activities are simultaneous. RNase H probably can proceed both in a polymerase-dependent (RNA cut into small fragments by the same RT performing DNA synthesis) and a polymerase-independent mode (cleavage of remaining RNA fragments by free RTs). Secondly, RT performs DNA-directed plus-strand DNA synthesis using the PPT that has not been removed by RNase H as primers. PPT and tRNA primers are then removed by RNase H. The 3' and 5' ssDNA PBS regions hybridize to form a circular dsDNA intermediate. Strand displacement synthesis by RT to the PBS and PPT ends produces a blunt ended, linear dsDNA copy of the viral genome that includes long terminal repeats (LTRs) at both ends.</text>
</comment>
<comment type="function">
    <molecule>Integrase</molecule>
    <text evidence="3">Catalyzes viral DNA integration into the host chromosome, by performing a series of DNA cutting and joining reactions. This enzyme activity takes place after virion entry into a cell and reverse transcription of the RNA genome in dsDNA. The first step in the integration process is 3' processing. This step requires a complex comprising the viral genome, matrix protein and integrase. This complex is called the pre-integration complex (PIC). The integrase protein removes 2 nucleotides from each 3' end of the viral DNA, leaving recessed CA OH's at the 3' ends. In the second step that requires cell division, the PIC enters cell nucleus. In the third step, termed strand transfer, the integrase protein joins the previously processed 3' ends to the 5' ends of strands of target cellular DNA at the site of integration. The last step is viral DNA integration into host chromosome.</text>
</comment>
<comment type="catalytic activity">
    <reaction evidence="8">
        <text>DNA(n) + a 2'-deoxyribonucleoside 5'-triphosphate = DNA(n+1) + diphosphate</text>
        <dbReference type="Rhea" id="RHEA:22508"/>
        <dbReference type="Rhea" id="RHEA-COMP:17339"/>
        <dbReference type="Rhea" id="RHEA-COMP:17340"/>
        <dbReference type="ChEBI" id="CHEBI:33019"/>
        <dbReference type="ChEBI" id="CHEBI:61560"/>
        <dbReference type="ChEBI" id="CHEBI:173112"/>
        <dbReference type="EC" id="2.7.7.49"/>
    </reaction>
</comment>
<comment type="catalytic activity">
    <reaction evidence="8">
        <text>DNA(n) + a 2'-deoxyribonucleoside 5'-triphosphate = DNA(n+1) + diphosphate</text>
        <dbReference type="Rhea" id="RHEA:22508"/>
        <dbReference type="Rhea" id="RHEA-COMP:17339"/>
        <dbReference type="Rhea" id="RHEA-COMP:17340"/>
        <dbReference type="ChEBI" id="CHEBI:33019"/>
        <dbReference type="ChEBI" id="CHEBI:61560"/>
        <dbReference type="ChEBI" id="CHEBI:173112"/>
        <dbReference type="EC" id="2.7.7.7"/>
    </reaction>
</comment>
<comment type="catalytic activity">
    <reaction evidence="9">
        <text>Endonucleolytic cleavage to 5'-phosphomonoester.</text>
        <dbReference type="EC" id="3.1.26.4"/>
    </reaction>
</comment>
<comment type="cofactor">
    <cofactor evidence="8">
        <name>Mg(2+)</name>
        <dbReference type="ChEBI" id="CHEBI:18420"/>
    </cofactor>
    <text evidence="8">The RT polymerase active site binds 2 magnesium ions.</text>
</comment>
<comment type="cofactor">
    <cofactor evidence="3">
        <name>Mg(2+)</name>
        <dbReference type="ChEBI" id="CHEBI:18420"/>
    </cofactor>
    <text evidence="3">Binds 1 magnesium ion for ribonuclease H (RNase H) activity.</text>
</comment>
<comment type="cofactor">
    <cofactor evidence="3">
        <name>Mg(2+)</name>
        <dbReference type="ChEBI" id="CHEBI:18420"/>
    </cofactor>
    <text evidence="3">Magnesium ions are required for integrase activity. Binds at least 1, maybe 2 magnesium ions.</text>
</comment>
<comment type="activity regulation">
    <molecule>Protease</molecule>
    <text evidence="3">Most efficiently inhibited by Amprenavir, which is able to block Gag-Pol processing in infected cells.</text>
</comment>
<comment type="subunit">
    <molecule>Capsid protein p30</molecule>
    <text evidence="3">Homohexamer; further associates as homomultimer (By similarity). The virus core is composed of a lattice formed from hexagonal rings, each containing six capsid monomers (By similarity).</text>
</comment>
<comment type="subunit">
    <molecule>Gag-Pol polyprotein</molecule>
    <text evidence="3">Interacts (via PPXY motif) with host NEDD4 (By similarity). Interacts (via PSAP motif) with host TSG101 (By similarity). Interacts (via LYPX(n)L motif) with host PDCD6IP (By similarity).</text>
</comment>
<comment type="subunit">
    <molecule>Reverse transcriptase/ribonuclease H</molecule>
    <text evidence="3 12">The reverse transcriptase is a monomer (Potential). Interacts (via RNase domains) with host release factor ETF1; this interaction is essential for translational readthrough of amber codon between viral gag and pol genes, as well as for viral replication (By similarity).</text>
</comment>
<comment type="subunit">
    <molecule>Integrase</molecule>
    <text evidence="3">Homodimer (By similarity).</text>
</comment>
<comment type="subcellular location">
    <molecule>Gag-Pol polyprotein</molecule>
    <subcellularLocation>
        <location evidence="1">Virion</location>
    </subcellularLocation>
    <subcellularLocation>
        <location evidence="1">Host cell membrane</location>
        <topology evidence="1">Lipid-anchor</topology>
    </subcellularLocation>
    <subcellularLocation>
        <location evidence="1">Host late endosome membrane</location>
        <topology evidence="1">Lipid-anchor</topology>
    </subcellularLocation>
    <subcellularLocation>
        <location evidence="4">Host endosome</location>
        <location evidence="4">Host multivesicular body</location>
    </subcellularLocation>
    <text evidence="3">These locations are probably linked to virus assembly sites.</text>
</comment>
<comment type="subcellular location">
    <molecule>Matrix protein p15</molecule>
    <subcellularLocation>
        <location evidence="3">Virion</location>
    </subcellularLocation>
</comment>
<comment type="subcellular location">
    <molecule>Capsid protein p30</molecule>
    <subcellularLocation>
        <location evidence="3">Virion</location>
    </subcellularLocation>
</comment>
<comment type="subcellular location">
    <molecule>Nucleocapsid protein p10-Pol</molecule>
    <subcellularLocation>
        <location evidence="3">Virion</location>
    </subcellularLocation>
</comment>
<comment type="subcellular location">
    <molecule>Protease</molecule>
    <subcellularLocation>
        <location evidence="3">Virion</location>
    </subcellularLocation>
</comment>
<comment type="subcellular location">
    <molecule>RNA-binding phosphoprotein p12</molecule>
    <subcellularLocation>
        <location evidence="3">Host cytoplasm</location>
    </subcellularLocation>
    <text evidence="3">Localizes to the host cytoplasm early in infection and binds to the mitotic chromosomes later on.</text>
</comment>
<comment type="domain">
    <molecule>Gag-Pol polyprotein</molecule>
    <text evidence="1">Late-budding domains (L domains) are short sequence motifs essential for viral particle release. They can occur individually or in close proximity within structural proteins. They interacts with sorting cellular proteins of the multivesicular body (MVB) pathway. Most of these proteins are class E vacuolar protein sorting factors belonging to ESCRT-I, ESCRT-II or ESCRT-III complexes. RNA-binding phosphoprotein p12 contains one L domain: a PPXY motif which potentially interacts with the WW domain 3 of NEDD4 E3 ubiquitin ligase. PPXY motif is essential for virus egress. Matrix protein p15 contains one L domain: a PTAP/PSAP motif, which potentially interacts with the UEV domain of TSG101. The junction between the matrix protein p15 and RNA-binding phosphoprotein p12 also contains one L domain: a LYPX(n)L motif which potentially interacts with PDCD6IP. Both PSAP and LYPX(n)L domains might play little to no role in budding and possibly drive residual virus release. contains.</text>
</comment>
<comment type="PTM">
    <molecule>Gag-Pol polyprotein</molecule>
    <text evidence="3">Specific enzymatic cleavages by the viral protease yield mature proteins. The protease is released by autocatalytic cleavage. The polyprotein is cleaved during and after budding, this process is termed maturation.</text>
</comment>
<comment type="PTM">
    <molecule>RNA-binding phosphoprotein p12</molecule>
    <text evidence="3">Phosphorylated on serine residues.</text>
</comment>
<comment type="miscellaneous">
    <molecule>Gag-Pol polyprotein</molecule>
    <text evidence="3">This protein is translated as a gag-pol fusion protein by episodic readthrough of the gag protein termination codon. Readthrough of the terminator codon TAG occurs between the codons for 506-Asp and 508-Gly.</text>
</comment>
<comment type="miscellaneous">
    <molecule>Nucleocapsid protein p10-Pol</molecule>
    <text evidence="3">Nucleocapsid protein p10-Pol released from Pol polyprotein (NC-pol) is a few amino acids shorter than the nucleocapsid protein p10 released from Gag polyprotein (NC-gag).</text>
</comment>
<comment type="miscellaneous">
    <molecule>Reverse transcriptase/ribonuclease H</molecule>
    <text evidence="8">The reverse transcriptase is an error-prone enzyme that lacks a proof-reading function. High mutations rate is a direct consequence of this characteristic. RT also displays frequent template switching leading to high recombination rate. Recombination mostly occurs between homologous regions of the two copackaged RNA genomes. If these two RNA molecules derive from different viral strains, reverse transcription will give rise to highly recombinated proviral DNAs.</text>
</comment>
<comment type="similarity">
    <text evidence="12">Belongs to the retroviral Pol polyprotein family.</text>
</comment>
<comment type="sequence caution" evidence="12">
    <conflict type="erroneous gene model prediction">
        <sequence resource="EMBL-CDS" id="AAA43056"/>
    </conflict>
</comment>
<comment type="sequence caution" evidence="12">
    <conflict type="frameshift">
        <sequence resource="EMBL-CDS" id="AAA43056"/>
    </conflict>
</comment>
<comment type="sequence caution" evidence="12">
    <conflict type="erroneous initiation">
        <sequence resource="EMBL-CDS" id="AAC31801"/>
    </conflict>
    <text>Extended N-terminus.</text>
</comment>
<name>POL_FLV</name>
<organismHost>
    <name type="scientific">Felidae</name>
    <name type="common">cat family</name>
    <dbReference type="NCBI Taxonomy" id="9681"/>
</organismHost>
<gene>
    <name type="primary">pol</name>
</gene>
<sequence length="1712" mass="192423">MGQTITTPLSLTLDHWSEVRARAHNQGVEVRKKKWITLCEAEWVMMNVGWPREGTFSLDNISQVEKKIFAPGPYGHPDQVPYITTWRSLATDPPSWVRPFLPPPKPPTPLPQPLSPQPSAPLTSSLYPVLPKSDPPKPPVLPPDPSSPLIDLLTEEPPPYPGGHGPPPSGPRTPTASPIASRLRERRENPAEESQALPLREGPNNRPQYWPFSASDLYNWKSHNPPFSQDPVALTNLIESILVTHQPTWDDCQQLLQALLTGEERQRVLLEARKQVPGEDGRPTQLPNVIDETFPLTRPNWDFATPAGREHLRLYRQLLLAGLRGAARRPTNLAQVKQVVQGKEETPAAFLERLKEAYRMYTPYDPEDPGQAASVILSFIYQSSPDIRNKLQRLEGLQGFTLSDLLKEAEKIYNKRETPEEREERLWQRQEERDKKRHKEMTKVLATVVAQNRDKDREESKLGDQRKIPLGKDQCAYCKEKGHWVRDCPKRPRKKPANSTLLNLGDQESQGQDPPPEPRITLKIGGQPVTFLVDTGAQHSVLTRPDGPLSDRTALVQGATGSKNYRWTTDRRVQLATGKVTHSFLYVPECPYPLLGRDLLTKLKAQIHFTGEGANVVGPKGLPLQVLTLQLEEEYRLFEPESTQKQEMDIWLKNFPQAWAETGGMGTAHCQAPVLIQLKATATPISIRQYPMPHEAYQGIKPHIRRMLDQGILKPCQSPWNTPLLPVKKPGTEDYRPVQDLREVNKRVEDIHPTVPNPYNLLSTLPPSHPWYTVLDLKDAFFCLRLHSESQLLFAFEWRDPEIGLSGQLTWTRLPQGFKNSPTLFDEALHSDLADFRVRYPALVLLQYVDDLLLAAATRTECLEGTKALLETLGNKGYRASAKKAQICLQEVTYLGYSLKDGQRWLTKARKEAILSIPVPKNSRQVREFLGTAGYCRLWIPGFAELAAPLYPLTRPGTLFQWGTEQQLAFEDIKKALLSSPALGLPDITKPFELFIDENSGFAKGVLVQKLGPWKRPVAYLSKKLDTVASGWPPCLRMVAAIAILVKDAGKLTLGQPLTILTSHPVEALVRQPPNKWLSNARMTHYQAMLLDAERVHFGPTVSLNPATLLPLPSGGNHHDCLQILAETHGTRPDLTDQPLPDADLTWYTDGSSFIRNGEREAGAAVTTESEVIWAAPLPPGTSAQRAELIALTQALKMAEGKKLTVYTDSRYAFATTHVHGEIYRRRGLLTSEGKEIKNKNEILALLEALFLPKRLSIIHCPGHQKGDSPQAKGNRLADDTAKKAATETHSSLTVLPTELIEGPKRPPWEYDDSDLDLVQKLEAHYEPKRGTWEYRGKTIMPEKYAKELISHLHKLTHLSARKMKTLLEREETGFYLPNRDLHLRQVTESCRACAQINAGKIKFGPDVRARGRRPGTHWEVDFTEIKPGMYGYKYLLVFIDTFSGWAEAYPAKHETAKVVAKKLLEEIFPRYGIPQVLGSDNGPAFISQVSQSVATLLGINWKLHCAYRPQSSGQVERMNRSIKETLTKLTLETGSKDWVLLLPLVLYRVRNTPGPHGLTPFEILYGAPPPMAHFFDTDISSFATSPTMQAHLRALQLVQEEIQRPLAAAYREKLETPVVPHPFKPGDSVWVRRHQTKNLEPRWKGPHIVLLTTPTALKVDGVAAWIHASHVKAAGPTTNQDLSDSPSSDDPSRWKVQRTQNPLKIRLSRGT</sequence>